<organism>
    <name type="scientific">Mus musculus</name>
    <name type="common">Mouse</name>
    <dbReference type="NCBI Taxonomy" id="10090"/>
    <lineage>
        <taxon>Eukaryota</taxon>
        <taxon>Metazoa</taxon>
        <taxon>Chordata</taxon>
        <taxon>Craniata</taxon>
        <taxon>Vertebrata</taxon>
        <taxon>Euteleostomi</taxon>
        <taxon>Mammalia</taxon>
        <taxon>Eutheria</taxon>
        <taxon>Euarchontoglires</taxon>
        <taxon>Glires</taxon>
        <taxon>Rodentia</taxon>
        <taxon>Myomorpha</taxon>
        <taxon>Muroidea</taxon>
        <taxon>Muridae</taxon>
        <taxon>Murinae</taxon>
        <taxon>Mus</taxon>
        <taxon>Mus</taxon>
    </lineage>
</organism>
<dbReference type="EC" id="2.1.1.364" evidence="2"/>
<dbReference type="EMBL" id="AY138582">
    <property type="protein sequence ID" value="AAN11291.1"/>
    <property type="status" value="ALT_INIT"/>
    <property type="molecule type" value="mRNA"/>
</dbReference>
<dbReference type="EMBL" id="AC116469">
    <property type="status" value="NOT_ANNOTATED_CDS"/>
    <property type="molecule type" value="Genomic_DNA"/>
</dbReference>
<dbReference type="EMBL" id="AC127319">
    <property type="status" value="NOT_ANNOTATED_CDS"/>
    <property type="molecule type" value="Genomic_DNA"/>
</dbReference>
<dbReference type="EMBL" id="AC134910">
    <property type="status" value="NOT_ANNOTATED_CDS"/>
    <property type="molecule type" value="Genomic_DNA"/>
</dbReference>
<dbReference type="EMBL" id="AK044828">
    <property type="protein sequence ID" value="BAC32109.1"/>
    <property type="molecule type" value="mRNA"/>
</dbReference>
<dbReference type="EMBL" id="AK054270">
    <property type="protein sequence ID" value="BAC35712.2"/>
    <property type="molecule type" value="mRNA"/>
</dbReference>
<dbReference type="EMBL" id="AK077567">
    <property type="protein sequence ID" value="BAC36867.1"/>
    <property type="molecule type" value="mRNA"/>
</dbReference>
<dbReference type="EMBL" id="AY036886">
    <property type="protein sequence ID" value="AAK70213.1"/>
    <property type="molecule type" value="mRNA"/>
</dbReference>
<dbReference type="EMBL" id="AY036887">
    <property type="protein sequence ID" value="AAK70214.1"/>
    <property type="molecule type" value="mRNA"/>
</dbReference>
<dbReference type="SMR" id="Q8BRH4"/>
<dbReference type="DIP" id="DIP-61282N"/>
<dbReference type="FunCoup" id="Q8BRH4">
    <property type="interactions" value="2770"/>
</dbReference>
<dbReference type="IntAct" id="Q8BRH4">
    <property type="interactions" value="6"/>
</dbReference>
<dbReference type="MINT" id="Q8BRH4"/>
<dbReference type="STRING" id="10090.ENSMUSP00000043874"/>
<dbReference type="GlyGen" id="Q8BRH4">
    <property type="glycosylation" value="15 sites, 3 N-linked glycans (3 sites), 1 O-linked glycan (3 sites)"/>
</dbReference>
<dbReference type="iPTMnet" id="Q8BRH4"/>
<dbReference type="PhosphoSitePlus" id="Q8BRH4"/>
<dbReference type="jPOST" id="Q8BRH4"/>
<dbReference type="PaxDb" id="10090-ENSMUSP00000043874"/>
<dbReference type="ProteomicsDB" id="263638">
    <molecule id="Q8BRH4-1"/>
</dbReference>
<dbReference type="ProteomicsDB" id="263639">
    <molecule id="Q8BRH4-2"/>
</dbReference>
<dbReference type="Pumba" id="Q8BRH4"/>
<dbReference type="AGR" id="MGI:2444959"/>
<dbReference type="MGI" id="MGI:2444959">
    <property type="gene designation" value="Kmt2c"/>
</dbReference>
<dbReference type="eggNOG" id="KOG4443">
    <property type="taxonomic scope" value="Eukaryota"/>
</dbReference>
<dbReference type="InParanoid" id="Q8BRH4"/>
<dbReference type="OrthoDB" id="6516936at2759"/>
<dbReference type="PhylomeDB" id="Q8BRH4"/>
<dbReference type="Reactome" id="R-MMU-3214841">
    <property type="pathway name" value="PKMTs methylate histone lysines"/>
</dbReference>
<dbReference type="Reactome" id="R-MMU-8936459">
    <property type="pathway name" value="RUNX1 regulates genes involved in megakaryocyte differentiation and platelet function"/>
</dbReference>
<dbReference type="Reactome" id="R-MMU-9772755">
    <property type="pathway name" value="Formation of WDR5-containing histone-modifying complexes"/>
</dbReference>
<dbReference type="Reactome" id="R-MMU-9818564">
    <property type="pathway name" value="Epigenetic regulation of gene expression by MLL3 and MLL4 complexes"/>
</dbReference>
<dbReference type="ChiTaRS" id="Kmt2c">
    <property type="organism name" value="mouse"/>
</dbReference>
<dbReference type="PRO" id="PR:Q8BRH4"/>
<dbReference type="Proteomes" id="UP000000589">
    <property type="component" value="Unplaced"/>
</dbReference>
<dbReference type="RNAct" id="Q8BRH4">
    <property type="molecule type" value="protein"/>
</dbReference>
<dbReference type="GO" id="GO:0035097">
    <property type="term" value="C:histone methyltransferase complex"/>
    <property type="evidence" value="ECO:0000266"/>
    <property type="project" value="MGI"/>
</dbReference>
<dbReference type="GO" id="GO:0044666">
    <property type="term" value="C:MLL3/4 complex"/>
    <property type="evidence" value="ECO:0007669"/>
    <property type="project" value="InterPro"/>
</dbReference>
<dbReference type="GO" id="GO:0005654">
    <property type="term" value="C:nucleoplasm"/>
    <property type="evidence" value="ECO:0000304"/>
    <property type="project" value="Reactome"/>
</dbReference>
<dbReference type="GO" id="GO:0005634">
    <property type="term" value="C:nucleus"/>
    <property type="evidence" value="ECO:0000266"/>
    <property type="project" value="MGI"/>
</dbReference>
<dbReference type="GO" id="GO:0016746">
    <property type="term" value="F:acyltransferase activity"/>
    <property type="evidence" value="ECO:0007669"/>
    <property type="project" value="UniProtKB-KW"/>
</dbReference>
<dbReference type="GO" id="GO:0003677">
    <property type="term" value="F:DNA binding"/>
    <property type="evidence" value="ECO:0007669"/>
    <property type="project" value="UniProtKB-KW"/>
</dbReference>
<dbReference type="GO" id="GO:0042800">
    <property type="term" value="F:histone H3K4 methyltransferase activity"/>
    <property type="evidence" value="ECO:0000314"/>
    <property type="project" value="UniProtKB"/>
</dbReference>
<dbReference type="GO" id="GO:0140945">
    <property type="term" value="F:histone H3K4 monomethyltransferase activity"/>
    <property type="evidence" value="ECO:0007669"/>
    <property type="project" value="RHEA"/>
</dbReference>
<dbReference type="GO" id="GO:0140999">
    <property type="term" value="F:histone H3K4 trimethyltransferase activity"/>
    <property type="evidence" value="ECO:0007669"/>
    <property type="project" value="UniProtKB-EC"/>
</dbReference>
<dbReference type="GO" id="GO:0042054">
    <property type="term" value="F:histone methyltransferase activity"/>
    <property type="evidence" value="ECO:0000250"/>
    <property type="project" value="UniProtKB"/>
</dbReference>
<dbReference type="GO" id="GO:0008270">
    <property type="term" value="F:zinc ion binding"/>
    <property type="evidence" value="ECO:0007669"/>
    <property type="project" value="UniProtKB-KW"/>
</dbReference>
<dbReference type="GO" id="GO:0061029">
    <property type="term" value="P:eyelid development in camera-type eye"/>
    <property type="evidence" value="ECO:0000315"/>
    <property type="project" value="MGI"/>
</dbReference>
<dbReference type="GO" id="GO:0032259">
    <property type="term" value="P:methylation"/>
    <property type="evidence" value="ECO:0007669"/>
    <property type="project" value="UniProtKB-KW"/>
</dbReference>
<dbReference type="GO" id="GO:0035264">
    <property type="term" value="P:multicellular organism growth"/>
    <property type="evidence" value="ECO:0000315"/>
    <property type="project" value="MGI"/>
</dbReference>
<dbReference type="GO" id="GO:0048146">
    <property type="term" value="P:positive regulation of fibroblast proliferation"/>
    <property type="evidence" value="ECO:0000315"/>
    <property type="project" value="MGI"/>
</dbReference>
<dbReference type="GO" id="GO:0006355">
    <property type="term" value="P:regulation of DNA-templated transcription"/>
    <property type="evidence" value="ECO:0007669"/>
    <property type="project" value="InterPro"/>
</dbReference>
<dbReference type="GO" id="GO:0010468">
    <property type="term" value="P:regulation of gene expression"/>
    <property type="evidence" value="ECO:0000315"/>
    <property type="project" value="MGI"/>
</dbReference>
<dbReference type="GO" id="GO:0007338">
    <property type="term" value="P:single fertilization"/>
    <property type="evidence" value="ECO:0000315"/>
    <property type="project" value="MGI"/>
</dbReference>
<dbReference type="CDD" id="cd15696">
    <property type="entry name" value="ePHD1_KMT2C"/>
    <property type="match status" value="1"/>
</dbReference>
<dbReference type="CDD" id="cd15697">
    <property type="entry name" value="ePHD2_KMT2C"/>
    <property type="match status" value="1"/>
</dbReference>
<dbReference type="CDD" id="cd22026">
    <property type="entry name" value="HMG-box_KMT2C"/>
    <property type="match status" value="1"/>
</dbReference>
<dbReference type="CDD" id="cd15509">
    <property type="entry name" value="PHD1_KMT2C_like"/>
    <property type="match status" value="1"/>
</dbReference>
<dbReference type="CDD" id="cd15594">
    <property type="entry name" value="PHD2_KMT2C"/>
    <property type="match status" value="1"/>
</dbReference>
<dbReference type="CDD" id="cd15511">
    <property type="entry name" value="PHD3_KMT2C"/>
    <property type="match status" value="1"/>
</dbReference>
<dbReference type="CDD" id="cd15596">
    <property type="entry name" value="PHD4_KMT2C"/>
    <property type="match status" value="1"/>
</dbReference>
<dbReference type="CDD" id="cd15513">
    <property type="entry name" value="PHD5_KMT2C_like"/>
    <property type="match status" value="1"/>
</dbReference>
<dbReference type="CDD" id="cd15600">
    <property type="entry name" value="PHD6_KMT2C"/>
    <property type="match status" value="1"/>
</dbReference>
<dbReference type="CDD" id="cd19171">
    <property type="entry name" value="SET_KMT2C_2D"/>
    <property type="match status" value="1"/>
</dbReference>
<dbReference type="FunFam" id="1.10.30.10:FF:000009">
    <property type="entry name" value="Histone-lysine N-methyltransferase"/>
    <property type="match status" value="1"/>
</dbReference>
<dbReference type="FunFam" id="2.170.270.10:FF:000003">
    <property type="entry name" value="Histone-lysine N-methyltransferase"/>
    <property type="match status" value="1"/>
</dbReference>
<dbReference type="FunFam" id="3.30.160.360:FF:000001">
    <property type="entry name" value="Histone-lysine N-methyltransferase"/>
    <property type="match status" value="1"/>
</dbReference>
<dbReference type="FunFam" id="3.30.40.10:FF:000002">
    <property type="entry name" value="Histone-lysine N-methyltransferase"/>
    <property type="match status" value="1"/>
</dbReference>
<dbReference type="FunFam" id="3.30.40.10:FF:000049">
    <property type="entry name" value="Histone-lysine N-methyltransferase"/>
    <property type="match status" value="1"/>
</dbReference>
<dbReference type="FunFam" id="3.30.40.10:FF:000070">
    <property type="entry name" value="Histone-lysine N-methyltransferase"/>
    <property type="match status" value="1"/>
</dbReference>
<dbReference type="FunFam" id="3.30.40.10:FF:001142">
    <property type="entry name" value="Histone-lysine N-methyltransferase"/>
    <property type="match status" value="1"/>
</dbReference>
<dbReference type="FunFam" id="3.30.40.10:FF:000080">
    <property type="entry name" value="Histone-lysine N-methyltransferase 2C"/>
    <property type="match status" value="1"/>
</dbReference>
<dbReference type="FunFam" id="3.30.40.10:FF:000095">
    <property type="entry name" value="Histone-lysine N-methyltransferase 2C"/>
    <property type="match status" value="1"/>
</dbReference>
<dbReference type="FunFam" id="3.30.40.10:FF:000237">
    <property type="entry name" value="Histone-lysine N-methyltransferase 2C"/>
    <property type="match status" value="1"/>
</dbReference>
<dbReference type="Gene3D" id="3.30.160.360">
    <property type="match status" value="1"/>
</dbReference>
<dbReference type="Gene3D" id="1.10.30.10">
    <property type="entry name" value="High mobility group box domain"/>
    <property type="match status" value="1"/>
</dbReference>
<dbReference type="Gene3D" id="2.170.270.10">
    <property type="entry name" value="SET domain"/>
    <property type="match status" value="1"/>
</dbReference>
<dbReference type="Gene3D" id="3.30.40.10">
    <property type="entry name" value="Zinc/RING finger domain, C3HC4 (zinc finger)"/>
    <property type="match status" value="7"/>
</dbReference>
<dbReference type="InterPro" id="IPR034732">
    <property type="entry name" value="EPHD"/>
</dbReference>
<dbReference type="InterPro" id="IPR003889">
    <property type="entry name" value="FYrich_C"/>
</dbReference>
<dbReference type="InterPro" id="IPR003888">
    <property type="entry name" value="FYrich_N"/>
</dbReference>
<dbReference type="InterPro" id="IPR009071">
    <property type="entry name" value="HMG_box_dom"/>
</dbReference>
<dbReference type="InterPro" id="IPR036910">
    <property type="entry name" value="HMG_box_dom_sf"/>
</dbReference>
<dbReference type="InterPro" id="IPR000637">
    <property type="entry name" value="HMGI/Y_DNA-bd_CS"/>
</dbReference>
<dbReference type="InterPro" id="IPR041967">
    <property type="entry name" value="KMT2C_ePHD1"/>
</dbReference>
<dbReference type="InterPro" id="IPR041968">
    <property type="entry name" value="KMT2C_ePHD2"/>
</dbReference>
<dbReference type="InterPro" id="IPR047004">
    <property type="entry name" value="KMT2C_PHD2"/>
</dbReference>
<dbReference type="InterPro" id="IPR047003">
    <property type="entry name" value="KMT2C_PHD4"/>
</dbReference>
<dbReference type="InterPro" id="IPR047005">
    <property type="entry name" value="KMT2C_PHD6"/>
</dbReference>
<dbReference type="InterPro" id="IPR037877">
    <property type="entry name" value="PHD3_KMT2C"/>
</dbReference>
<dbReference type="InterPro" id="IPR003616">
    <property type="entry name" value="Post-SET_dom"/>
</dbReference>
<dbReference type="InterPro" id="IPR001214">
    <property type="entry name" value="SET_dom"/>
</dbReference>
<dbReference type="InterPro" id="IPR046341">
    <property type="entry name" value="SET_dom_sf"/>
</dbReference>
<dbReference type="InterPro" id="IPR011011">
    <property type="entry name" value="Znf_FYVE_PHD"/>
</dbReference>
<dbReference type="InterPro" id="IPR001965">
    <property type="entry name" value="Znf_PHD"/>
</dbReference>
<dbReference type="InterPro" id="IPR019787">
    <property type="entry name" value="Znf_PHD-finger"/>
</dbReference>
<dbReference type="InterPro" id="IPR001841">
    <property type="entry name" value="Znf_RING"/>
</dbReference>
<dbReference type="InterPro" id="IPR013083">
    <property type="entry name" value="Znf_RING/FYVE/PHD"/>
</dbReference>
<dbReference type="PANTHER" id="PTHR45888:SF1">
    <property type="entry name" value="HISTONE-LYSINE N-METHYLTRANSFERASE 2C"/>
    <property type="match status" value="1"/>
</dbReference>
<dbReference type="PANTHER" id="PTHR45888">
    <property type="entry name" value="HL01030P-RELATED"/>
    <property type="match status" value="1"/>
</dbReference>
<dbReference type="Pfam" id="PF05965">
    <property type="entry name" value="FYRC"/>
    <property type="match status" value="1"/>
</dbReference>
<dbReference type="Pfam" id="PF05964">
    <property type="entry name" value="FYRN"/>
    <property type="match status" value="1"/>
</dbReference>
<dbReference type="Pfam" id="PF00628">
    <property type="entry name" value="PHD"/>
    <property type="match status" value="4"/>
</dbReference>
<dbReference type="Pfam" id="PF00856">
    <property type="entry name" value="SET"/>
    <property type="match status" value="1"/>
</dbReference>
<dbReference type="Pfam" id="PF13771">
    <property type="entry name" value="zf-HC5HC2H"/>
    <property type="match status" value="1"/>
</dbReference>
<dbReference type="Pfam" id="PF13832">
    <property type="entry name" value="zf-HC5HC2H_2"/>
    <property type="match status" value="1"/>
</dbReference>
<dbReference type="SMART" id="SM00542">
    <property type="entry name" value="FYRC"/>
    <property type="match status" value="1"/>
</dbReference>
<dbReference type="SMART" id="SM00541">
    <property type="entry name" value="FYRN"/>
    <property type="match status" value="1"/>
</dbReference>
<dbReference type="SMART" id="SM00398">
    <property type="entry name" value="HMG"/>
    <property type="match status" value="1"/>
</dbReference>
<dbReference type="SMART" id="SM00249">
    <property type="entry name" value="PHD"/>
    <property type="match status" value="8"/>
</dbReference>
<dbReference type="SMART" id="SM00508">
    <property type="entry name" value="PostSET"/>
    <property type="match status" value="1"/>
</dbReference>
<dbReference type="SMART" id="SM00184">
    <property type="entry name" value="RING"/>
    <property type="match status" value="4"/>
</dbReference>
<dbReference type="SMART" id="SM00317">
    <property type="entry name" value="SET"/>
    <property type="match status" value="1"/>
</dbReference>
<dbReference type="SUPFAM" id="SSF57903">
    <property type="entry name" value="FYVE/PHD zinc finger"/>
    <property type="match status" value="6"/>
</dbReference>
<dbReference type="SUPFAM" id="SSF47095">
    <property type="entry name" value="HMG-box"/>
    <property type="match status" value="1"/>
</dbReference>
<dbReference type="SUPFAM" id="SSF82199">
    <property type="entry name" value="SET domain"/>
    <property type="match status" value="1"/>
</dbReference>
<dbReference type="PROSITE" id="PS50216">
    <property type="entry name" value="DHHC"/>
    <property type="match status" value="1"/>
</dbReference>
<dbReference type="PROSITE" id="PS51805">
    <property type="entry name" value="EPHD"/>
    <property type="match status" value="2"/>
</dbReference>
<dbReference type="PROSITE" id="PS51543">
    <property type="entry name" value="FYRC"/>
    <property type="match status" value="1"/>
</dbReference>
<dbReference type="PROSITE" id="PS51542">
    <property type="entry name" value="FYRN"/>
    <property type="match status" value="1"/>
</dbReference>
<dbReference type="PROSITE" id="PS00354">
    <property type="entry name" value="HMGI_Y"/>
    <property type="match status" value="1"/>
</dbReference>
<dbReference type="PROSITE" id="PS50868">
    <property type="entry name" value="POST_SET"/>
    <property type="match status" value="1"/>
</dbReference>
<dbReference type="PROSITE" id="PS50280">
    <property type="entry name" value="SET"/>
    <property type="match status" value="1"/>
</dbReference>
<dbReference type="PROSITE" id="PS01359">
    <property type="entry name" value="ZF_PHD_1"/>
    <property type="match status" value="5"/>
</dbReference>
<dbReference type="PROSITE" id="PS50016">
    <property type="entry name" value="ZF_PHD_2"/>
    <property type="match status" value="6"/>
</dbReference>
<dbReference type="PROSITE" id="PS50089">
    <property type="entry name" value="ZF_RING_2"/>
    <property type="match status" value="1"/>
</dbReference>
<gene>
    <name type="primary">Kmt2c</name>
    <name type="synonym">Mll3</name>
</gene>
<sequence length="4903" mass="540187">MSSEEDRSAEQQQPPPAPPEEPGAPAPSPAAADKRPRGRPRKDGASPFQRARKKPRSRGKSTVEDEDSMDGLETTETENIVETEIKEQSVEEDAETEVDSSKQPVSALQRSVSEESANSLVSVGVEAKISEQLCAFCYCGEKSSLGQGDLKQFRVTPGLTLPWKDQPSNKDIDDNSSGTCEKIQNYAPRKQRGQRKERPPQQSAVSCVSVSTQTACEDQAGKLWDELSLVGLPDAIDVQALFDSTGTCWAHHRCVEWSLGICQMEEPLLVNVDKAVVSGSTERCAFCKHLGATIKCCEEKCTQMYHYPCAAGAGTFQDFSHFFLLCPEHIDQAPERSKEDANCAVCDSPGDLLDQFFCTTCGQHYHGMCLDIAVTPLKRAGWQCPECKVCQNCKQSGEDSKMLVCDTCDKGYHTFCLQPVMKSVPTNGWKCKNCRICIECGTRSSTQWHHNCLICDTCYQQQDNLCPFCGKCYHPELQKDMLHCNMCKRWVHLECDKPTDQELDSQLKEDYICMYCKHLGAEIDPLHPGNEVEMPELPTDYASGMEIEGTEDEVVFLEQTVNKDVSDHQCRPGIVPDVQVYTEEPQKSNPLESPDTVGLITSESSDNKMNPDLANEIAHEVDTEKTEMLSKGRHVCEEDQNEDRMEVTENIEVLPHQTIVPQEDLLLSEDSEVASKELSPPKSAPETAAPEALLSPHSERSLSCKEPLLTERVQEEMEQKENSEFSTGCVDFEMTLAVDSCDKDSSCQGDKYVELPAEEESTFSSATDLNKADVSSSSTLCSDLPSCDMLHGYPPAFNSAAGSIMPTTYISVTPKIGMGKPAITKRKFSPGRPRSKQGAWSNHNTVSPPSWAPDTSEGREIFKPRQLSGSAIWSIKVGRGSGFPGKRRPRGAGLSGRGGRGRSKLKSGIGAVVLPGVSAADISSNKDEEENSMHNTVVLFSSSDKFTLQQDMCVVCGSFGQGAEGRLLACSQCGQCYHPYCVSIKITKVVLSKGWRCLECTVCEACGKATDPGRLLLCDDCDISYHTYCLDPPLQTVPKGGWKCKWCVWCRHCGATSAGLRCEWQNNYTQCAPCASLSSCPVCCRNYREEDLILQCRQCDRWMHAVCQNLNTEEEVENVADIGFDCSMCRPYMPVSNVPSSDCCDSSLVAQIVTKVKELDPPKTYTQDGVCLTESGMSQLQSLTVTAPRRKRTKPKLKLKIINQNSVAVLQTPPDIQSEHSRDGEMDDSREGELMDCDGKSESSPEREAGDDETKGIEGTDAIKKRKRKPYRPGIGGFMVRQRSRTGQGKAKRSVVRKDSSGSISEQLPSRDDGWREQLPDTLVDEPVSVAENTDKIKKRYRKRKNKLEETFPAYLQEAFFGKDLLDTSRQNKLSVDNLSEDAAQLSFKTGFLDPSSDPLLSSSSTSAKPGTQGTADDPLADISEVLNTDDDILGIISDDLAKSVDHSDIGPTTADASSLPQPGVSQSSRPLTEEQLDGILSPELDKMVTDGAILGKLYKIPELGGKDVEDLFTAVLSPATTQPAPLPQPPPPPQLLPMHNQDVFSRMPLMNGLIGPSPHLPHNSLPPGSGLGTFPAIAQSPYTDVRDKSPAFNAIASDPNSSWAPTTPSMEGENDTLSNAQRSTLKWEKEEALGEMATVAPVLYTNINFPNLKEEFPDWTTRVKQIAKLWRKASSQERAPYVQKARDNRAALRINKVQMSNDSMKRQQQQDSIDPSSRIDSDLFKDPLKQRESEHEQEWKFRQQMRQKSKQQAKIEATQKLEQVKNEQQQQQQQQQQQQQQQLASQHLLVAPGSDTPSSGAQSPLTPQAGNGNVSPAQTFHKDLFSKHLPGTPASTPSDGVFVKPQPPPPPSTPSRIPVQESLSQSQNSQPPSPQMFSPGSSHSRPPSPVDPYAKMVGTPRPPPGGHSFPRRNSVTPVENCVPLSSVPRPIHMNETSATRPSPARDLCASSMTNSDPYAKPPDTPRPMMTDQFSKPFSLPRSPVISEQSTKGPLTTGTSDHFTKPSPRTDAFQRQRLPDPYAGPSLTPAPLGNGPFKTPLHPPPSQDPYGSVSQTSRRLSVDPYERPALTPRPVDNFSHSQSNDPYSHPPLTPHPAMTESFTHASRAFPQPGTISRSASQDPYSQPPGTPRPLIDSYSQTSGTARSNPDPYSQPPGTPRPNTIDPYSQQPPTPRPSPQTDMFVSSVANQRHTDPYTHHLGPPRPGISVPYSQPPAVPRPRTSEGFTRPSSARPALMPNQDPFLQAAQNRVPGLPGPLIRPPDTCSQTPRPPGPGRIDTFTHASSSAVRDPYDQPPVTPRPHSESFGTSQVVHDLVDRPVPGSEGNFSTSSNLPVSSQGQQFSSVSQLPGPVPTSGGTDTQNTVNMSQADTEKLRQRQKLREIILQQQQQKKIASRQEKGPQDTAVVPHPVPLPHWQPESINQAFTRPPPPYPGSTRSPVIPPLGPRYAVFPKDQRGPYPPEVAGMGMRPHGFRFGFPGAGHGPMPSQDRFHVPQQIQGSGIPPHIRRPMSMEMPRPSNNPPLNNPVGLPQHFPPQGLPVQQHNILGQAFIELRHRAPDGRSRLPFAASPSSVIESPSHPRHGNFLPRPDFPGPRHTDPIRQPSQCLSNQLPVHPNLEQVPPSQQEQGHPAHQSSIVMRPLNHPLSGEFSEAPLSTSTPAETSPDNLEIAGQSSAGLEEKLDSDDPSVKELDVKDLEGVEVKDLDDEDLENLNLDTEDGKGDDLDTLDNLETNDPNLDDLLRSGEFDIIAYTDPELDLGDKKSMFNEELDLNVPIDDKLDNQCASVEPKTRDQGDKTMVLEDKDLPQRKSSVSSEIKTEALSPYSKEEIQSEIKNHDDSRGDADTACSQAASAQTNHSDRGKTALLTTDQDMLEKRCNQENAGPVVSAIQGSTPLPARDVMNSCDITGSTPVLSSLLSNEKCDDSDIRPSGSSPPSLPISPSTHGSSLPPTLIVPPSPLLDNTVNSNVTVVPRINHAFSQGVPVNPGFIQGQSSVNHNLGTGKPTNQTVPLTNQSSTMSGPQQLMIPQTLAQQNRERPLLLEEQPLLLQDLLDQERQEQQQQRQMQAMIRQRSEPFFPNIDFDAITDPIMKAKMVALKGINKVMAQNSLGMPPMVMSRFPFMGPSVAGTQNNDGQTLVPQAVAQDGSITHQISRPNPPNFGPGFVNDSQRKQYEEWLQETQQLLQMQQKYLEEQIGAHRKSKKALSAKQRTAKKAGREFPEEDAEQLKHVTEQQSMVQKQLEQIRKQQKEHAELIEDYRIKQQQQQQQCALAPPILMPGVQPQPPLVPGATSLTMSQPNFPMVPQQLQHQQHTAVISGHTSPARMPSLPGWQSNSASAHLPLNPPRIQPPIAQLSLKTCTPAPGTVSSANPQNGPPPRVEFDDNNPFSESFQERERKERLREQQERQRVQLMQEVDRQRALQQRMEMEQHCLMGAELANRTPVSQMPFYGSDRPCDFLQPPRPLQQSPQHQQQIGPVLQQQNVQQGSVNSPPNQTFMQTNEQRQVGPPSFVPDSPSASGGSPNFHSVKPGHGNLPGSSFQQSPLRPPFTPILPGTSPVANSNVPCGQDPAVTQGQNYSGSSQSLIQLYSDIIPEEKGKKKRTRKKKKDDDAESGKAPSTPHSDCAAPLTPGLSETTSTPAVSSPSELPQQRQQEPVEPVPVPTPNVSAGQPCIESENKLPNSEFIKETSNQQTHVNAEADKPSVETPNKTEEIKLEKAETQPSQEDTKVEEKTGNKIKDIVAGPVSSIQCPSHPVGTPTTKGDTGNELLKHLLKNKKASSLLTQKPEGTLSSDESSTKDGKLIEKQSPAEGLQTLGAQMQGGFGGGNSQLPKTDGASENKKQRSKRTQRTGEKAAPRSKKRKKDEEEKQAMYSSSDSFTHLKQQNNLSNPPTPPASLPPTPPPMACQKMANGFATTEELAGKAGVLVSHEVARALGPKPFQLPFRPQDDLLARAIAQGPKTVDVPASLPTPPHNNHEELRIQDHYGDRDTPDSFVPSSSPESVVGVEVNKYPDLSLVKEEPPEPVPSPIIPILPSISGKNSESRRNDIKTEPGTLFFTSPFGSSPNGPRSGLISVAITLHPTAAENISSVVAAFSDLLHVRIPNSYEVSNAPDVPPMGLVSSHRVNPSLEYRQHLLLRGPPPGSANPPRLATSYRLKQPNVPFPPTSNGLSGYKDSSHGPAEGASLRPQWCCHCKVVILGSGVRKSCKDLTFVNKGSRENTKRMEKDIVFCSNNCFILYSSAAQAKNSDNKESLPSLPQSPMKEPSKAFHQYSNNISTLDVHCLPQFQEKVSPPASPPISFPPAFEAAKVESKPDELKVTVKLKPRLRTVPVGLEDCRPLNKKWRGMKWKKWSIHIVIPKGTFKPPCEDEIDEFLKKLGTCLKPDPVPKDCRKCCFCHEEGDGLTDGPARLLNLDLDLWVHLNCALWSTEVYETQAGALINVELALRRGLQMKCVFCHKTGATSGCHRFRCTNIYHFTCATKAQCMFFKDKTMLCPMHKPKGIHEQQLSYFAVFRRVYVQRDEVRQIASIVQRGERDHTFRVGSLIFHTIGQLLPQQMQAFHSPKALFPVGYEASRLYWSTRYANRRCRYLCSIEEKDGRPVFVIRIVEQGHEDLVLSDSSPKDVWDKILEPVACVRKKSEMLQLFPAYLKGEDLFGLTVSAVARIAESLPGVEACENYTFRYGRNPLMELPLAVNPTGCARSEPKMSAHVKRFVLRPHTLNSTSTSKSFQSTVTGELNAPYSKQFVHSKSSQYRRMKTEWKSNVYLARSRIQGLGLYAARDIEKHTMVIEYIGTIIRNEVANRKEKLYESQNRGVYMFRMDNDHVIDATLTGGPARYINHSCAPNCVAEVVTFERGHKIIISSNRRIQKGEELCYDYKFDFEDDQHKIPCHCGAVNCRKWMN</sequence>
<name>KMT2C_MOUSE</name>
<keyword id="KW-0007">Acetylation</keyword>
<keyword id="KW-0010">Activator</keyword>
<keyword id="KW-0012">Acyltransferase</keyword>
<keyword id="KW-0025">Alternative splicing</keyword>
<keyword id="KW-0156">Chromatin regulator</keyword>
<keyword id="KW-0175">Coiled coil</keyword>
<keyword id="KW-0238">DNA-binding</keyword>
<keyword id="KW-0449">Lipoprotein</keyword>
<keyword id="KW-0479">Metal-binding</keyword>
<keyword id="KW-0488">Methylation</keyword>
<keyword id="KW-0489">Methyltransferase</keyword>
<keyword id="KW-0539">Nucleus</keyword>
<keyword id="KW-0564">Palmitate</keyword>
<keyword id="KW-0597">Phosphoprotein</keyword>
<keyword id="KW-1185">Reference proteome</keyword>
<keyword id="KW-0677">Repeat</keyword>
<keyword id="KW-0949">S-adenosyl-L-methionine</keyword>
<keyword id="KW-0804">Transcription</keyword>
<keyword id="KW-0805">Transcription regulation</keyword>
<keyword id="KW-0808">Transferase</keyword>
<keyword id="KW-0862">Zinc</keyword>
<keyword id="KW-0863">Zinc-finger</keyword>
<proteinExistence type="evidence at protein level"/>
<accession>Q8BRH4</accession>
<accession>Q5YLV9</accession>
<accession>Q8BK12</accession>
<accession>Q8C6M3</accession>
<accession>Q923H5</accession>
<accession>Q923H6</accession>
<protein>
    <recommendedName>
        <fullName>Histone-lysine N-methyltransferase 2C</fullName>
        <shortName>Lysine N-methyltransferase 2C</shortName>
        <ecNumber evidence="2">2.1.1.364</ecNumber>
    </recommendedName>
    <alternativeName>
        <fullName>Myeloid/lymphoid or mixed-lineage leukemia protein 3 homolog</fullName>
    </alternativeName>
</protein>
<reference key="1">
    <citation type="journal article" date="2006" name="Gene">
        <title>Characterization and expression analysis during embryo development of the mouse ortholog of MLL3.</title>
        <authorList>
            <person name="Brun M.-E."/>
            <person name="Gasca S."/>
            <person name="Girard C."/>
            <person name="Bouton K."/>
            <person name="De Massy B."/>
            <person name="De Sario A."/>
        </authorList>
    </citation>
    <scope>NUCLEOTIDE SEQUENCE [MRNA] (ISOFORM 2)</scope>
    <scope>TISSUE SPECIFICITY</scope>
    <source>
        <strain>BALB/cJ</strain>
        <tissue>Testis</tissue>
    </source>
</reference>
<reference key="2">
    <citation type="journal article" date="2009" name="PLoS Biol.">
        <title>Lineage-specific biology revealed by a finished genome assembly of the mouse.</title>
        <authorList>
            <person name="Church D.M."/>
            <person name="Goodstadt L."/>
            <person name="Hillier L.W."/>
            <person name="Zody M.C."/>
            <person name="Goldstein S."/>
            <person name="She X."/>
            <person name="Bult C.J."/>
            <person name="Agarwala R."/>
            <person name="Cherry J.L."/>
            <person name="DiCuccio M."/>
            <person name="Hlavina W."/>
            <person name="Kapustin Y."/>
            <person name="Meric P."/>
            <person name="Maglott D."/>
            <person name="Birtle Z."/>
            <person name="Marques A.C."/>
            <person name="Graves T."/>
            <person name="Zhou S."/>
            <person name="Teague B."/>
            <person name="Potamousis K."/>
            <person name="Churas C."/>
            <person name="Place M."/>
            <person name="Herschleb J."/>
            <person name="Runnheim R."/>
            <person name="Forrest D."/>
            <person name="Amos-Landgraf J."/>
            <person name="Schwartz D.C."/>
            <person name="Cheng Z."/>
            <person name="Lindblad-Toh K."/>
            <person name="Eichler E.E."/>
            <person name="Ponting C.P."/>
        </authorList>
    </citation>
    <scope>NUCLEOTIDE SEQUENCE [LARGE SCALE GENOMIC DNA]</scope>
    <source>
        <strain>C57BL/6J</strain>
    </source>
</reference>
<reference key="3">
    <citation type="journal article" date="2005" name="Science">
        <title>The transcriptional landscape of the mammalian genome.</title>
        <authorList>
            <person name="Carninci P."/>
            <person name="Kasukawa T."/>
            <person name="Katayama S."/>
            <person name="Gough J."/>
            <person name="Frith M.C."/>
            <person name="Maeda N."/>
            <person name="Oyama R."/>
            <person name="Ravasi T."/>
            <person name="Lenhard B."/>
            <person name="Wells C."/>
            <person name="Kodzius R."/>
            <person name="Shimokawa K."/>
            <person name="Bajic V.B."/>
            <person name="Brenner S.E."/>
            <person name="Batalov S."/>
            <person name="Forrest A.R."/>
            <person name="Zavolan M."/>
            <person name="Davis M.J."/>
            <person name="Wilming L.G."/>
            <person name="Aidinis V."/>
            <person name="Allen J.E."/>
            <person name="Ambesi-Impiombato A."/>
            <person name="Apweiler R."/>
            <person name="Aturaliya R.N."/>
            <person name="Bailey T.L."/>
            <person name="Bansal M."/>
            <person name="Baxter L."/>
            <person name="Beisel K.W."/>
            <person name="Bersano T."/>
            <person name="Bono H."/>
            <person name="Chalk A.M."/>
            <person name="Chiu K.P."/>
            <person name="Choudhary V."/>
            <person name="Christoffels A."/>
            <person name="Clutterbuck D.R."/>
            <person name="Crowe M.L."/>
            <person name="Dalla E."/>
            <person name="Dalrymple B.P."/>
            <person name="de Bono B."/>
            <person name="Della Gatta G."/>
            <person name="di Bernardo D."/>
            <person name="Down T."/>
            <person name="Engstrom P."/>
            <person name="Fagiolini M."/>
            <person name="Faulkner G."/>
            <person name="Fletcher C.F."/>
            <person name="Fukushima T."/>
            <person name="Furuno M."/>
            <person name="Futaki S."/>
            <person name="Gariboldi M."/>
            <person name="Georgii-Hemming P."/>
            <person name="Gingeras T.R."/>
            <person name="Gojobori T."/>
            <person name="Green R.E."/>
            <person name="Gustincich S."/>
            <person name="Harbers M."/>
            <person name="Hayashi Y."/>
            <person name="Hensch T.K."/>
            <person name="Hirokawa N."/>
            <person name="Hill D."/>
            <person name="Huminiecki L."/>
            <person name="Iacono M."/>
            <person name="Ikeo K."/>
            <person name="Iwama A."/>
            <person name="Ishikawa T."/>
            <person name="Jakt M."/>
            <person name="Kanapin A."/>
            <person name="Katoh M."/>
            <person name="Kawasawa Y."/>
            <person name="Kelso J."/>
            <person name="Kitamura H."/>
            <person name="Kitano H."/>
            <person name="Kollias G."/>
            <person name="Krishnan S.P."/>
            <person name="Kruger A."/>
            <person name="Kummerfeld S.K."/>
            <person name="Kurochkin I.V."/>
            <person name="Lareau L.F."/>
            <person name="Lazarevic D."/>
            <person name="Lipovich L."/>
            <person name="Liu J."/>
            <person name="Liuni S."/>
            <person name="McWilliam S."/>
            <person name="Madan Babu M."/>
            <person name="Madera M."/>
            <person name="Marchionni L."/>
            <person name="Matsuda H."/>
            <person name="Matsuzawa S."/>
            <person name="Miki H."/>
            <person name="Mignone F."/>
            <person name="Miyake S."/>
            <person name="Morris K."/>
            <person name="Mottagui-Tabar S."/>
            <person name="Mulder N."/>
            <person name="Nakano N."/>
            <person name="Nakauchi H."/>
            <person name="Ng P."/>
            <person name="Nilsson R."/>
            <person name="Nishiguchi S."/>
            <person name="Nishikawa S."/>
            <person name="Nori F."/>
            <person name="Ohara O."/>
            <person name="Okazaki Y."/>
            <person name="Orlando V."/>
            <person name="Pang K.C."/>
            <person name="Pavan W.J."/>
            <person name="Pavesi G."/>
            <person name="Pesole G."/>
            <person name="Petrovsky N."/>
            <person name="Piazza S."/>
            <person name="Reed J."/>
            <person name="Reid J.F."/>
            <person name="Ring B.Z."/>
            <person name="Ringwald M."/>
            <person name="Rost B."/>
            <person name="Ruan Y."/>
            <person name="Salzberg S.L."/>
            <person name="Sandelin A."/>
            <person name="Schneider C."/>
            <person name="Schoenbach C."/>
            <person name="Sekiguchi K."/>
            <person name="Semple C.A."/>
            <person name="Seno S."/>
            <person name="Sessa L."/>
            <person name="Sheng Y."/>
            <person name="Shibata Y."/>
            <person name="Shimada H."/>
            <person name="Shimada K."/>
            <person name="Silva D."/>
            <person name="Sinclair B."/>
            <person name="Sperling S."/>
            <person name="Stupka E."/>
            <person name="Sugiura K."/>
            <person name="Sultana R."/>
            <person name="Takenaka Y."/>
            <person name="Taki K."/>
            <person name="Tammoja K."/>
            <person name="Tan S.L."/>
            <person name="Tang S."/>
            <person name="Taylor M.S."/>
            <person name="Tegner J."/>
            <person name="Teichmann S.A."/>
            <person name="Ueda H.R."/>
            <person name="van Nimwegen E."/>
            <person name="Verardo R."/>
            <person name="Wei C.L."/>
            <person name="Yagi K."/>
            <person name="Yamanishi H."/>
            <person name="Zabarovsky E."/>
            <person name="Zhu S."/>
            <person name="Zimmer A."/>
            <person name="Hide W."/>
            <person name="Bult C."/>
            <person name="Grimmond S.M."/>
            <person name="Teasdale R.D."/>
            <person name="Liu E.T."/>
            <person name="Brusic V."/>
            <person name="Quackenbush J."/>
            <person name="Wahlestedt C."/>
            <person name="Mattick J.S."/>
            <person name="Hume D.A."/>
            <person name="Kai C."/>
            <person name="Sasaki D."/>
            <person name="Tomaru Y."/>
            <person name="Fukuda S."/>
            <person name="Kanamori-Katayama M."/>
            <person name="Suzuki M."/>
            <person name="Aoki J."/>
            <person name="Arakawa T."/>
            <person name="Iida J."/>
            <person name="Imamura K."/>
            <person name="Itoh M."/>
            <person name="Kato T."/>
            <person name="Kawaji H."/>
            <person name="Kawagashira N."/>
            <person name="Kawashima T."/>
            <person name="Kojima M."/>
            <person name="Kondo S."/>
            <person name="Konno H."/>
            <person name="Nakano K."/>
            <person name="Ninomiya N."/>
            <person name="Nishio T."/>
            <person name="Okada M."/>
            <person name="Plessy C."/>
            <person name="Shibata K."/>
            <person name="Shiraki T."/>
            <person name="Suzuki S."/>
            <person name="Tagami M."/>
            <person name="Waki K."/>
            <person name="Watahiki A."/>
            <person name="Okamura-Oho Y."/>
            <person name="Suzuki H."/>
            <person name="Kawai J."/>
            <person name="Hayashizaki Y."/>
        </authorList>
    </citation>
    <scope>NUCLEOTIDE SEQUENCE [LARGE SCALE MRNA] OF 1-814 AND 4803-4903</scope>
    <source>
        <strain>C57BL/6J</strain>
        <tissue>Embryo</tissue>
    </source>
</reference>
<reference key="4">
    <citation type="journal article" date="2001" name="Cancer Detect. Prev.">
        <title>Novel human HALR (MLL3) gene encodes a protein homologous to ALR and to ALL-1 involved in leukemia, and maps to chromosome 7q36 associated with leukemia and developmental defects.</title>
        <authorList>
            <person name="Tan Y.C."/>
            <person name="Chow V.T."/>
        </authorList>
    </citation>
    <scope>NUCLEOTIDE SEQUENCE [MRNA] OF 957-1376 AND 4214-4894</scope>
    <source>
        <tissue>Myeloma</tissue>
    </source>
</reference>
<reference key="5">
    <citation type="journal article" date="2010" name="Cell">
        <title>A tissue-specific atlas of mouse protein phosphorylation and expression.</title>
        <authorList>
            <person name="Huttlin E.L."/>
            <person name="Jedrychowski M.P."/>
            <person name="Elias J.E."/>
            <person name="Goswami T."/>
            <person name="Rad R."/>
            <person name="Beausoleil S.A."/>
            <person name="Villen J."/>
            <person name="Haas W."/>
            <person name="Sowa M.E."/>
            <person name="Gygi S.P."/>
        </authorList>
    </citation>
    <scope>PHOSPHORYLATION [LARGE SCALE ANALYSIS] AT TYR-2824</scope>
    <scope>IDENTIFICATION BY MASS SPECTROMETRY [LARGE SCALE ANALYSIS]</scope>
    <source>
        <tissue>Brain</tissue>
        <tissue>Lung</tissue>
        <tissue>Spleen</tissue>
    </source>
</reference>
<reference key="6">
    <citation type="journal article" date="2013" name="Mol. Cell">
        <title>SIRT5-mediated lysine desuccinylation impacts diverse metabolic pathways.</title>
        <authorList>
            <person name="Park J."/>
            <person name="Chen Y."/>
            <person name="Tishkoff D.X."/>
            <person name="Peng C."/>
            <person name="Tan M."/>
            <person name="Dai L."/>
            <person name="Xie Z."/>
            <person name="Zhang Y."/>
            <person name="Zwaans B.M."/>
            <person name="Skinner M.E."/>
            <person name="Lombard D.B."/>
            <person name="Zhao Y."/>
        </authorList>
    </citation>
    <scope>ACETYLATION [LARGE SCALE ANALYSIS] AT LYS-1761; LYS-2005; LYS-2796 AND LYS-2862</scope>
    <scope>IDENTIFICATION BY MASS SPECTROMETRY [LARGE SCALE ANALYSIS]</scope>
    <source>
        <tissue>Embryonic fibroblast</tissue>
    </source>
</reference>
<reference key="7">
    <citation type="journal article" date="2014" name="Mol. Cell. Proteomics">
        <title>Immunoaffinity enrichment and mass spectrometry analysis of protein methylation.</title>
        <authorList>
            <person name="Guo A."/>
            <person name="Gu H."/>
            <person name="Zhou J."/>
            <person name="Mulhern D."/>
            <person name="Wang Y."/>
            <person name="Lee K.A."/>
            <person name="Yang V."/>
            <person name="Aguiar M."/>
            <person name="Kornhauser J."/>
            <person name="Jia X."/>
            <person name="Ren J."/>
            <person name="Beausoleil S.A."/>
            <person name="Silva J.C."/>
            <person name="Vemulapalli V."/>
            <person name="Bedford M.T."/>
            <person name="Comb M.J."/>
        </authorList>
    </citation>
    <scope>METHYLATION [LARGE SCALE ANALYSIS] AT ARG-2447; ARG-2563 AND ARG-4132</scope>
    <scope>IDENTIFICATION BY MASS SPECTROMETRY [LARGE SCALE ANALYSIS]</scope>
    <source>
        <tissue>Brain</tissue>
        <tissue>Embryo</tissue>
    </source>
</reference>
<feature type="chain" id="PRO_0000124880" description="Histone-lysine N-methyltransferase 2C">
    <location>
        <begin position="1"/>
        <end position="4903"/>
    </location>
</feature>
<feature type="domain" description="DHHC" evidence="4">
    <location>
        <begin position="435"/>
        <end position="488"/>
    </location>
</feature>
<feature type="domain" description="FYR N-terminal" evidence="9">
    <location>
        <begin position="4537"/>
        <end position="4597"/>
    </location>
</feature>
<feature type="domain" description="FYR C-terminal" evidence="10">
    <location>
        <begin position="4598"/>
        <end position="4683"/>
    </location>
</feature>
<feature type="domain" description="SET" evidence="8">
    <location>
        <begin position="4763"/>
        <end position="4879"/>
    </location>
</feature>
<feature type="domain" description="Post-SET" evidence="6">
    <location>
        <begin position="4887"/>
        <end position="4903"/>
    </location>
</feature>
<feature type="DNA-binding region" description="A.T hook">
    <location>
        <begin position="34"/>
        <end position="46"/>
    </location>
</feature>
<feature type="zinc finger region" description="C2HC pre-PHD-type 1; degenerate" evidence="11">
    <location>
        <begin position="226"/>
        <end position="261"/>
    </location>
</feature>
<feature type="zinc finger region" description="PHD-type 1" evidence="11">
    <location>
        <begin position="282"/>
        <end position="330"/>
    </location>
</feature>
<feature type="zinc finger region" description="PHD-type 2" evidence="5">
    <location>
        <begin position="340"/>
        <end position="390"/>
    </location>
</feature>
<feature type="zinc finger region" description="RING-type" evidence="7">
    <location>
        <begin position="343"/>
        <end position="388"/>
    </location>
</feature>
<feature type="zinc finger region" description="PHD-type 3" evidence="5">
    <location>
        <begin position="387"/>
        <end position="437"/>
    </location>
</feature>
<feature type="zinc finger region" description="PHD-type 4" evidence="5">
    <location>
        <begin position="463"/>
        <end position="519"/>
    </location>
</feature>
<feature type="zinc finger region" description="PHD-type 5" evidence="5">
    <location>
        <begin position="950"/>
        <end position="1003"/>
    </location>
</feature>
<feature type="zinc finger region" description="PHD-type 6" evidence="5">
    <location>
        <begin position="1000"/>
        <end position="1050"/>
    </location>
</feature>
<feature type="zinc finger region" description="PHD-type 7" evidence="5">
    <location>
        <begin position="1077"/>
        <end position="1132"/>
    </location>
</feature>
<feature type="zinc finger region" description="C2HC pre-PHD-type 2" evidence="11">
    <location>
        <begin position="4391"/>
        <end position="4431"/>
    </location>
</feature>
<feature type="zinc finger region" description="PHD-type 8" evidence="11">
    <location>
        <begin position="4452"/>
        <end position="4499"/>
    </location>
</feature>
<feature type="region of interest" description="Disordered" evidence="12">
    <location>
        <begin position="1"/>
        <end position="116"/>
    </location>
</feature>
<feature type="region of interest" description="Disordered" evidence="12">
    <location>
        <begin position="159"/>
        <end position="202"/>
    </location>
</feature>
<feature type="region of interest" description="Disordered" evidence="12">
    <location>
        <begin position="671"/>
        <end position="703"/>
    </location>
</feature>
<feature type="region of interest" description="Disordered" evidence="12">
    <location>
        <begin position="824"/>
        <end position="857"/>
    </location>
</feature>
<feature type="region of interest" description="Disordered" evidence="12">
    <location>
        <begin position="882"/>
        <end position="904"/>
    </location>
</feature>
<feature type="region of interest" description="Disordered" evidence="12">
    <location>
        <begin position="1208"/>
        <end position="1318"/>
    </location>
</feature>
<feature type="region of interest" description="Disordered" evidence="12">
    <location>
        <begin position="1397"/>
        <end position="1419"/>
    </location>
</feature>
<feature type="region of interest" description="Disordered" evidence="12">
    <location>
        <begin position="1447"/>
        <end position="1473"/>
    </location>
</feature>
<feature type="region of interest" description="Disordered" evidence="12">
    <location>
        <begin position="1594"/>
        <end position="1617"/>
    </location>
</feature>
<feature type="region of interest" description="Disordered" evidence="12">
    <location>
        <begin position="1698"/>
        <end position="1757"/>
    </location>
</feature>
<feature type="region of interest" description="Disordered" evidence="12">
    <location>
        <begin position="1791"/>
        <end position="2375"/>
    </location>
</feature>
<feature type="region of interest" description="Disordered" evidence="12">
    <location>
        <begin position="2561"/>
        <end position="2668"/>
    </location>
</feature>
<feature type="region of interest" description="Disordered" evidence="12">
    <location>
        <begin position="2702"/>
        <end position="2736"/>
    </location>
</feature>
<feature type="region of interest" description="Disordered" evidence="12">
    <location>
        <begin position="2786"/>
        <end position="2844"/>
    </location>
</feature>
<feature type="region of interest" description="Disordered" evidence="12">
    <location>
        <begin position="2920"/>
        <end position="2953"/>
    </location>
</feature>
<feature type="region of interest" description="Disordered" evidence="12">
    <location>
        <begin position="3198"/>
        <end position="3223"/>
    </location>
</feature>
<feature type="region of interest" description="Disordered" evidence="12">
    <location>
        <begin position="3329"/>
        <end position="3407"/>
    </location>
</feature>
<feature type="region of interest" description="Disordered" evidence="12">
    <location>
        <begin position="3444"/>
        <end position="3910"/>
    </location>
</feature>
<feature type="region of interest" description="Disordered" evidence="12">
    <location>
        <begin position="4159"/>
        <end position="4184"/>
    </location>
</feature>
<feature type="coiled-coil region" evidence="3">
    <location>
        <begin position="1330"/>
        <end position="1352"/>
    </location>
</feature>
<feature type="coiled-coil region" evidence="3">
    <location>
        <begin position="1743"/>
        <end position="1790"/>
    </location>
</feature>
<feature type="coiled-coil region" evidence="3">
    <location>
        <begin position="3047"/>
        <end position="3074"/>
    </location>
</feature>
<feature type="coiled-coil region" evidence="3">
    <location>
        <begin position="3166"/>
        <end position="3193"/>
    </location>
</feature>
<feature type="coiled-coil region" evidence="3">
    <location>
        <begin position="3224"/>
        <end position="3270"/>
    </location>
</feature>
<feature type="coiled-coil region" evidence="3">
    <location>
        <begin position="3387"/>
        <end position="3432"/>
    </location>
</feature>
<feature type="short sequence motif" description="WDR5 interaction motif (WIN)" evidence="2">
    <location>
        <begin position="4699"/>
        <end position="4704"/>
    </location>
</feature>
<feature type="compositionally biased region" description="Pro residues" evidence="12">
    <location>
        <begin position="13"/>
        <end position="28"/>
    </location>
</feature>
<feature type="compositionally biased region" description="Basic residues" evidence="12">
    <location>
        <begin position="50"/>
        <end position="59"/>
    </location>
</feature>
<feature type="compositionally biased region" description="Acidic residues" evidence="12">
    <location>
        <begin position="64"/>
        <end position="81"/>
    </location>
</feature>
<feature type="compositionally biased region" description="Polar residues" evidence="12">
    <location>
        <begin position="101"/>
        <end position="116"/>
    </location>
</feature>
<feature type="compositionally biased region" description="Basic residues" evidence="12">
    <location>
        <begin position="824"/>
        <end position="835"/>
    </location>
</feature>
<feature type="compositionally biased region" description="Polar residues" evidence="12">
    <location>
        <begin position="838"/>
        <end position="848"/>
    </location>
</feature>
<feature type="compositionally biased region" description="Basic and acidic residues" evidence="12">
    <location>
        <begin position="1217"/>
        <end position="1263"/>
    </location>
</feature>
<feature type="compositionally biased region" description="Basic and acidic residues" evidence="12">
    <location>
        <begin position="1309"/>
        <end position="1318"/>
    </location>
</feature>
<feature type="compositionally biased region" description="Polar residues" evidence="12">
    <location>
        <begin position="1406"/>
        <end position="1415"/>
    </location>
</feature>
<feature type="compositionally biased region" description="Polar residues" evidence="12">
    <location>
        <begin position="1455"/>
        <end position="1471"/>
    </location>
</feature>
<feature type="compositionally biased region" description="Polar residues" evidence="12">
    <location>
        <begin position="1599"/>
        <end position="1617"/>
    </location>
</feature>
<feature type="compositionally biased region" description="Low complexity" evidence="12">
    <location>
        <begin position="1707"/>
        <end position="1717"/>
    </location>
</feature>
<feature type="compositionally biased region" description="Basic and acidic residues" evidence="12">
    <location>
        <begin position="1718"/>
        <end position="1742"/>
    </location>
</feature>
<feature type="compositionally biased region" description="Polar residues" evidence="12">
    <location>
        <begin position="1796"/>
        <end position="1819"/>
    </location>
</feature>
<feature type="compositionally biased region" description="Low complexity" evidence="12">
    <location>
        <begin position="1855"/>
        <end position="1886"/>
    </location>
</feature>
<feature type="compositionally biased region" description="Polar residues" evidence="12">
    <location>
        <begin position="1986"/>
        <end position="2001"/>
    </location>
</feature>
<feature type="compositionally biased region" description="Polar residues" evidence="12">
    <location>
        <begin position="2113"/>
        <end position="2124"/>
    </location>
</feature>
<feature type="compositionally biased region" description="Polar residues" evidence="12">
    <location>
        <begin position="2137"/>
        <end position="2151"/>
    </location>
</feature>
<feature type="compositionally biased region" description="Polar residues" evidence="12">
    <location>
        <begin position="2325"/>
        <end position="2334"/>
    </location>
</feature>
<feature type="compositionally biased region" description="Low complexity" evidence="12">
    <location>
        <begin position="2335"/>
        <end position="2347"/>
    </location>
</feature>
<feature type="compositionally biased region" description="Polar residues" evidence="12">
    <location>
        <begin position="2355"/>
        <end position="2369"/>
    </location>
</feature>
<feature type="compositionally biased region" description="Polar residues" evidence="12">
    <location>
        <begin position="2602"/>
        <end position="2611"/>
    </location>
</feature>
<feature type="compositionally biased region" description="Polar residues" evidence="12">
    <location>
        <begin position="2621"/>
        <end position="2636"/>
    </location>
</feature>
<feature type="compositionally biased region" description="Polar residues" evidence="12">
    <location>
        <begin position="2653"/>
        <end position="2668"/>
    </location>
</feature>
<feature type="compositionally biased region" description="Basic and acidic residues" evidence="12">
    <location>
        <begin position="2788"/>
        <end position="2807"/>
    </location>
</feature>
<feature type="compositionally biased region" description="Basic and acidic residues" evidence="12">
    <location>
        <begin position="2825"/>
        <end position="2843"/>
    </location>
</feature>
<feature type="compositionally biased region" description="Low complexity" evidence="12">
    <location>
        <begin position="2929"/>
        <end position="2942"/>
    </location>
</feature>
<feature type="compositionally biased region" description="Basic residues" evidence="12">
    <location>
        <begin position="3198"/>
        <end position="3214"/>
    </location>
</feature>
<feature type="compositionally biased region" description="Basic and acidic residues" evidence="12">
    <location>
        <begin position="3391"/>
        <end position="3407"/>
    </location>
</feature>
<feature type="compositionally biased region" description="Low complexity" evidence="12">
    <location>
        <begin position="3464"/>
        <end position="3485"/>
    </location>
</feature>
<feature type="compositionally biased region" description="Polar residues" evidence="12">
    <location>
        <begin position="3486"/>
        <end position="3503"/>
    </location>
</feature>
<feature type="compositionally biased region" description="Polar residues" evidence="12">
    <location>
        <begin position="3515"/>
        <end position="3524"/>
    </location>
</feature>
<feature type="compositionally biased region" description="Polar residues" evidence="12">
    <location>
        <begin position="3557"/>
        <end position="3586"/>
    </location>
</feature>
<feature type="compositionally biased region" description="Polar residues" evidence="12">
    <location>
        <begin position="3632"/>
        <end position="3647"/>
    </location>
</feature>
<feature type="compositionally biased region" description="Basic and acidic residues" evidence="12">
    <location>
        <begin position="3697"/>
        <end position="3739"/>
    </location>
</feature>
<feature type="compositionally biased region" description="Basic and acidic residues" evidence="12">
    <location>
        <begin position="3795"/>
        <end position="3804"/>
    </location>
</feature>
<feature type="compositionally biased region" description="Polar residues" evidence="12">
    <location>
        <begin position="3871"/>
        <end position="3885"/>
    </location>
</feature>
<feature type="compositionally biased region" description="Pro residues" evidence="12">
    <location>
        <begin position="3890"/>
        <end position="3904"/>
    </location>
</feature>
<feature type="binding site" evidence="8">
    <location>
        <position position="4817"/>
    </location>
    <ligand>
        <name>S-adenosyl-L-methionine</name>
        <dbReference type="ChEBI" id="CHEBI:59789"/>
    </ligand>
</feature>
<feature type="binding site" evidence="1">
    <location>
        <begin position="4840"/>
        <end position="4841"/>
    </location>
    <ligand>
        <name>S-adenosyl-L-methionine</name>
        <dbReference type="ChEBI" id="CHEBI:59789"/>
    </ligand>
</feature>
<feature type="binding site" evidence="1">
    <location>
        <position position="4843"/>
    </location>
    <ligand>
        <name>Zn(2+)</name>
        <dbReference type="ChEBI" id="CHEBI:29105"/>
    </ligand>
</feature>
<feature type="binding site" evidence="1">
    <location>
        <position position="4891"/>
    </location>
    <ligand>
        <name>Zn(2+)</name>
        <dbReference type="ChEBI" id="CHEBI:29105"/>
    </ligand>
</feature>
<feature type="binding site" evidence="1">
    <location>
        <position position="4893"/>
    </location>
    <ligand>
        <name>Zn(2+)</name>
        <dbReference type="ChEBI" id="CHEBI:29105"/>
    </ligand>
</feature>
<feature type="binding site" evidence="1">
    <location>
        <position position="4898"/>
    </location>
    <ligand>
        <name>Zn(2+)</name>
        <dbReference type="ChEBI" id="CHEBI:29105"/>
    </ligand>
</feature>
<feature type="modified residue" description="Phosphoserine" evidence="2">
    <location>
        <position position="28"/>
    </location>
</feature>
<feature type="modified residue" description="Phosphoserine" evidence="2">
    <location>
        <position position="46"/>
    </location>
</feature>
<feature type="modified residue" description="Phosphoserine" evidence="2">
    <location>
        <position position="89"/>
    </location>
</feature>
<feature type="modified residue" description="Phosphoserine" evidence="2">
    <location>
        <position position="113"/>
    </location>
</feature>
<feature type="modified residue" description="N6-acetyllysine" evidence="2">
    <location>
        <position position="751"/>
    </location>
</feature>
<feature type="modified residue" description="Phosphoserine" evidence="2">
    <location>
        <position position="847"/>
    </location>
</feature>
<feature type="modified residue" description="Phosphoserine" evidence="2">
    <location>
        <position position="1294"/>
    </location>
</feature>
<feature type="modified residue" description="N6-acetyllysine" evidence="2">
    <location>
        <position position="1497"/>
    </location>
</feature>
<feature type="modified residue" description="N6-acetyllysine" evidence="17">
    <location>
        <position position="1761"/>
    </location>
</feature>
<feature type="modified residue" description="Phosphoserine" evidence="2">
    <location>
        <position position="1983"/>
    </location>
</feature>
<feature type="modified residue" description="N6-acetyllysine" evidence="17">
    <location>
        <position position="2005"/>
    </location>
</feature>
<feature type="modified residue" description="Asymmetric dimethylarginine" evidence="18">
    <location>
        <position position="2447"/>
    </location>
</feature>
<feature type="modified residue" description="Asymmetric dimethylarginine" evidence="18">
    <location>
        <position position="2563"/>
    </location>
</feature>
<feature type="modified residue" description="N6-acetyllysine" evidence="17">
    <location>
        <position position="2796"/>
    </location>
</feature>
<feature type="modified residue" description="N6-acetyllysine" evidence="2">
    <location>
        <position position="2803"/>
    </location>
</feature>
<feature type="modified residue" description="Phosphoserine" evidence="2">
    <location>
        <position position="2822"/>
    </location>
</feature>
<feature type="modified residue" description="Phosphotyrosine" evidence="16">
    <location>
        <position position="2824"/>
    </location>
</feature>
<feature type="modified residue" description="N6-acetyllysine" evidence="2">
    <location>
        <position position="2826"/>
    </location>
</feature>
<feature type="modified residue" description="N6-acetyllysine" evidence="17">
    <location>
        <position position="2862"/>
    </location>
</feature>
<feature type="modified residue" description="N6-acetyllysine" evidence="2">
    <location>
        <position position="3709"/>
    </location>
</feature>
<feature type="modified residue" description="Phosphoserine" evidence="2">
    <location>
        <position position="4027"/>
    </location>
</feature>
<feature type="modified residue" description="Asymmetric dimethylarginine" evidence="18">
    <location>
        <position position="4132"/>
    </location>
</feature>
<feature type="modified residue" description="Phosphoserine" evidence="2">
    <location>
        <position position="4260"/>
    </location>
</feature>
<feature type="splice variant" id="VSP_020568" description="In isoform 2." evidence="14">
    <location>
        <begin position="839"/>
        <end position="878"/>
    </location>
</feature>
<feature type="splice variant" id="VSP_020569" description="In isoform 2." evidence="14">
    <location>
        <begin position="1414"/>
        <end position="1448"/>
    </location>
</feature>
<feature type="splice variant" id="VSP_020570" description="In isoform 2." evidence="14">
    <location>
        <begin position="1791"/>
        <end position="3080"/>
    </location>
</feature>
<feature type="splice variant" id="VSP_020571" description="In isoform 2." evidence="14">
    <location>
        <begin position="3814"/>
        <end position="3884"/>
    </location>
</feature>
<feature type="splice variant" id="VSP_020572" description="In isoform 2." evidence="14">
    <location>
        <begin position="4714"/>
        <end position="4717"/>
    </location>
</feature>
<feature type="sequence conflict" description="In Ref. 1; AAN11291." evidence="15" ref="1">
    <original>SPAAADKRP</original>
    <variation>RSFVCGCGA</variation>
    <location>
        <begin position="28"/>
        <end position="36"/>
    </location>
</feature>
<feature type="sequence conflict" description="In Ref. 1; AAN11291." evidence="15" ref="1">
    <original>V</original>
    <variation>A</variation>
    <location>
        <position position="276"/>
    </location>
</feature>
<feature type="sequence conflict" description="In Ref. 3; BAC32109." evidence="15" ref="3">
    <original>NCRICIEC</original>
    <variation>VSDFLICF</variation>
    <location>
        <begin position="433"/>
        <end position="440"/>
    </location>
</feature>
<feature type="sequence conflict" description="In Ref. 1; AAN11291." evidence="15" ref="1">
    <original>E</original>
    <variation>G</variation>
    <location>
        <position position="533"/>
    </location>
</feature>
<feature type="sequence conflict" description="In Ref. 1; AAN11291." evidence="15" ref="1">
    <original>D</original>
    <variation>DA</variation>
    <location>
        <position position="577"/>
    </location>
</feature>
<feature type="sequence conflict" description="In Ref. 3; BAC35712." evidence="15" ref="3">
    <original>S</original>
    <variation>C</variation>
    <location>
        <position position="675"/>
    </location>
</feature>
<feature type="sequence conflict" description="In Ref. 1; AAN11291." evidence="15" ref="1">
    <original>K</original>
    <variation>E</variation>
    <location>
        <position position="720"/>
    </location>
</feature>
<feature type="sequence conflict" description="In Ref. 1; AAN11291." evidence="15" ref="1">
    <original>F</original>
    <variation>L</variation>
    <location>
        <position position="763"/>
    </location>
</feature>
<feature type="sequence conflict" description="In Ref. 1; AAN11291." evidence="15" ref="1">
    <original>H</original>
    <variation>Y</variation>
    <location>
        <position position="791"/>
    </location>
</feature>
<feature type="sequence conflict" description="In Ref. 1; AAN11291." evidence="15" ref="1">
    <original>VD</original>
    <variation>LH</variation>
    <location>
        <begin position="1324"/>
        <end position="1325"/>
    </location>
</feature>
<feature type="sequence conflict" description="In Ref. 1; AAN11291." evidence="15" ref="1">
    <original>E</original>
    <variation>V</variation>
    <location>
        <position position="1737"/>
    </location>
</feature>
<feature type="sequence conflict" description="In Ref. 1; AAN11291." evidence="15" ref="1">
    <original>Q</original>
    <variation>R</variation>
    <location>
        <position position="1776"/>
    </location>
</feature>
<feature type="sequence conflict" description="In Ref. 1; AAN11291." evidence="15" ref="1">
    <original>M</original>
    <variation>MM</variation>
    <location>
        <position position="3236"/>
    </location>
</feature>
<feature type="sequence conflict" description="In Ref. 1; AAN11291." evidence="15" ref="1">
    <original>QR</original>
    <variation>P</variation>
    <location>
        <begin position="3423"/>
        <end position="3424"/>
    </location>
</feature>
<feature type="sequence conflict" description="In Ref. 1; AAN11291." evidence="15" ref="1">
    <original>E</original>
    <variation>G</variation>
    <location>
        <position position="3657"/>
    </location>
</feature>
<feature type="sequence conflict" description="In Ref. 1; AAN11291." evidence="15" ref="1">
    <original>A</original>
    <variation>V</variation>
    <location>
        <position position="3668"/>
    </location>
</feature>
<feature type="sequence conflict" description="In Ref. 1; AAN11291." evidence="15" ref="1">
    <original>C</original>
    <variation>Y</variation>
    <location>
        <position position="4283"/>
    </location>
</feature>
<feature type="sequence conflict" description="In Ref. 1; AAN11291." evidence="15" ref="1">
    <original>E</original>
    <variation>D</variation>
    <location>
        <position position="4306"/>
    </location>
</feature>
<feature type="sequence conflict" description="In Ref. 1; AAN11291." evidence="15" ref="1">
    <original>Q</original>
    <variation>R</variation>
    <location>
        <position position="4520"/>
    </location>
</feature>
<feature type="sequence conflict" description="In Ref. 1; AAN11291." evidence="15" ref="1">
    <original>V</original>
    <variation>G</variation>
    <location>
        <position position="4531"/>
    </location>
</feature>
<feature type="sequence conflict" description="In Ref. 1; AAN11291." evidence="15" ref="1">
    <original>Y</original>
    <variation>H</variation>
    <location>
        <position position="4649"/>
    </location>
</feature>
<evidence type="ECO:0000250" key="1"/>
<evidence type="ECO:0000250" key="2">
    <source>
        <dbReference type="UniProtKB" id="Q8NEZ4"/>
    </source>
</evidence>
<evidence type="ECO:0000255" key="3"/>
<evidence type="ECO:0000255" key="4">
    <source>
        <dbReference type="PROSITE-ProRule" id="PRU00067"/>
    </source>
</evidence>
<evidence type="ECO:0000255" key="5">
    <source>
        <dbReference type="PROSITE-ProRule" id="PRU00146"/>
    </source>
</evidence>
<evidence type="ECO:0000255" key="6">
    <source>
        <dbReference type="PROSITE-ProRule" id="PRU00155"/>
    </source>
</evidence>
<evidence type="ECO:0000255" key="7">
    <source>
        <dbReference type="PROSITE-ProRule" id="PRU00175"/>
    </source>
</evidence>
<evidence type="ECO:0000255" key="8">
    <source>
        <dbReference type="PROSITE-ProRule" id="PRU00190"/>
    </source>
</evidence>
<evidence type="ECO:0000255" key="9">
    <source>
        <dbReference type="PROSITE-ProRule" id="PRU00875"/>
    </source>
</evidence>
<evidence type="ECO:0000255" key="10">
    <source>
        <dbReference type="PROSITE-ProRule" id="PRU00876"/>
    </source>
</evidence>
<evidence type="ECO:0000255" key="11">
    <source>
        <dbReference type="PROSITE-ProRule" id="PRU01146"/>
    </source>
</evidence>
<evidence type="ECO:0000256" key="12">
    <source>
        <dbReference type="SAM" id="MobiDB-lite"/>
    </source>
</evidence>
<evidence type="ECO:0000269" key="13">
    <source>
    </source>
</evidence>
<evidence type="ECO:0000303" key="14">
    <source>
    </source>
</evidence>
<evidence type="ECO:0000305" key="15"/>
<evidence type="ECO:0007744" key="16">
    <source>
    </source>
</evidence>
<evidence type="ECO:0007744" key="17">
    <source>
    </source>
</evidence>
<evidence type="ECO:0007744" key="18">
    <source>
    </source>
</evidence>
<comment type="function">
    <text evidence="2">Histone methyltransferase that catalyzes methyl group transfer from S-adenosyl-L-methionine to the epsilon-amino group of 'Lys-4' of histone H3 (H3K4). Part of chromatin remodeling machinery predominantly forms H3K4me1 methylation marks at active chromatin sites where transcription and DNA repair take place. Likely plays a redundant role with KMT2D in enriching H3K4me1 mark on primed and active enhancer elements.</text>
</comment>
<comment type="catalytic activity">
    <reaction evidence="2">
        <text>L-lysyl(4)-[histone H3] + S-adenosyl-L-methionine = N(6)-methyl-L-lysyl(4)-[histone H3] + S-adenosyl-L-homocysteine + H(+)</text>
        <dbReference type="Rhea" id="RHEA:60264"/>
        <dbReference type="Rhea" id="RHEA-COMP:15543"/>
        <dbReference type="Rhea" id="RHEA-COMP:15547"/>
        <dbReference type="ChEBI" id="CHEBI:15378"/>
        <dbReference type="ChEBI" id="CHEBI:29969"/>
        <dbReference type="ChEBI" id="CHEBI:57856"/>
        <dbReference type="ChEBI" id="CHEBI:59789"/>
        <dbReference type="ChEBI" id="CHEBI:61929"/>
        <dbReference type="EC" id="2.1.1.364"/>
    </reaction>
    <physiologicalReaction direction="left-to-right" evidence="2">
        <dbReference type="Rhea" id="RHEA:60265"/>
    </physiologicalReaction>
</comment>
<comment type="subunit">
    <text evidence="2">Component of the MLL3 complex (also named ASCOM complex), at least composed of catalytic subunit KMT2C/MLL3, ASH2L, RBBP5, WDR5, NCOA6, DPY30, KDM6A, PAXIP1/PTIP, PAGR1 and alpha- and beta-tubulin. Forms a core complex with the evolutionary conserved subcomplex WRAD composed of WDR5, RBBP5, ASH2L/ASH2 and DPY30 subunits; WRAD differentially stimulates the methyltransferase activity. Interacts (via WIN motif) with WDR5.</text>
</comment>
<comment type="subcellular location">
    <subcellularLocation>
        <location evidence="2">Nucleus</location>
    </subcellularLocation>
</comment>
<comment type="alternative products">
    <event type="alternative splicing"/>
    <isoform>
        <id>Q8BRH4-1</id>
        <name>1</name>
        <sequence type="displayed"/>
    </isoform>
    <isoform>
        <id>Q8BRH4-2</id>
        <name>2</name>
        <sequence type="described" ref="VSP_020568 VSP_020569 VSP_020570 VSP_020571 VSP_020572"/>
    </isoform>
</comment>
<comment type="tissue specificity">
    <text evidence="13">In adult, detected in testis, kidney, spleen and lung, weakly expressed in brain and absent in heart and liver. First detected throughout the embryo at 8 dpc when expression is strong in forebrain neuroepithelium and absent in heart. Expressed in the eye lens between 10 and 14.5 dpc. By 13 dpc, expressed strongly in spinal cord, hand/foot plates and gonads.</text>
</comment>
<comment type="domain">
    <text evidence="1">The SET domain interacts with histone H3 but not H2A, H2B and H4, and may have a H3 lysine specific methylation activity.</text>
</comment>
<comment type="similarity">
    <text evidence="8">Belongs to the class V-like SAM-binding methyltransferase superfamily. Histone-lysine methyltransferase family. TRX/MLL subfamily.</text>
</comment>
<comment type="sequence caution" evidence="15">
    <conflict type="erroneous initiation">
        <sequence resource="EMBL-CDS" id="AAN11291"/>
    </conflict>
    <text>Truncated N-terminus.</text>
</comment>